<name>PXPA_BORPA</name>
<keyword id="KW-0067">ATP-binding</keyword>
<keyword id="KW-0378">Hydrolase</keyword>
<keyword id="KW-0547">Nucleotide-binding</keyword>
<reference key="1">
    <citation type="journal article" date="2003" name="Nat. Genet.">
        <title>Comparative analysis of the genome sequences of Bordetella pertussis, Bordetella parapertussis and Bordetella bronchiseptica.</title>
        <authorList>
            <person name="Parkhill J."/>
            <person name="Sebaihia M."/>
            <person name="Preston A."/>
            <person name="Murphy L.D."/>
            <person name="Thomson N.R."/>
            <person name="Harris D.E."/>
            <person name="Holden M.T.G."/>
            <person name="Churcher C.M."/>
            <person name="Bentley S.D."/>
            <person name="Mungall K.L."/>
            <person name="Cerdeno-Tarraga A.-M."/>
            <person name="Temple L."/>
            <person name="James K.D."/>
            <person name="Harris B."/>
            <person name="Quail M.A."/>
            <person name="Achtman M."/>
            <person name="Atkin R."/>
            <person name="Baker S."/>
            <person name="Basham D."/>
            <person name="Bason N."/>
            <person name="Cherevach I."/>
            <person name="Chillingworth T."/>
            <person name="Collins M."/>
            <person name="Cronin A."/>
            <person name="Davis P."/>
            <person name="Doggett J."/>
            <person name="Feltwell T."/>
            <person name="Goble A."/>
            <person name="Hamlin N."/>
            <person name="Hauser H."/>
            <person name="Holroyd S."/>
            <person name="Jagels K."/>
            <person name="Leather S."/>
            <person name="Moule S."/>
            <person name="Norberczak H."/>
            <person name="O'Neil S."/>
            <person name="Ormond D."/>
            <person name="Price C."/>
            <person name="Rabbinowitsch E."/>
            <person name="Rutter S."/>
            <person name="Sanders M."/>
            <person name="Saunders D."/>
            <person name="Seeger K."/>
            <person name="Sharp S."/>
            <person name="Simmonds M."/>
            <person name="Skelton J."/>
            <person name="Squares R."/>
            <person name="Squares S."/>
            <person name="Stevens K."/>
            <person name="Unwin L."/>
            <person name="Whitehead S."/>
            <person name="Barrell B.G."/>
            <person name="Maskell D.J."/>
        </authorList>
    </citation>
    <scope>NUCLEOTIDE SEQUENCE [LARGE SCALE GENOMIC DNA]</scope>
    <source>
        <strain>12822 / ATCC BAA-587 / NCTC 13253</strain>
    </source>
</reference>
<comment type="function">
    <text evidence="1">Catalyzes the cleavage of 5-oxoproline to form L-glutamate coupled to the hydrolysis of ATP to ADP and inorganic phosphate.</text>
</comment>
<comment type="catalytic activity">
    <reaction evidence="1">
        <text>5-oxo-L-proline + ATP + 2 H2O = L-glutamate + ADP + phosphate + H(+)</text>
        <dbReference type="Rhea" id="RHEA:10348"/>
        <dbReference type="ChEBI" id="CHEBI:15377"/>
        <dbReference type="ChEBI" id="CHEBI:15378"/>
        <dbReference type="ChEBI" id="CHEBI:29985"/>
        <dbReference type="ChEBI" id="CHEBI:30616"/>
        <dbReference type="ChEBI" id="CHEBI:43474"/>
        <dbReference type="ChEBI" id="CHEBI:58402"/>
        <dbReference type="ChEBI" id="CHEBI:456216"/>
        <dbReference type="EC" id="3.5.2.9"/>
    </reaction>
</comment>
<comment type="subunit">
    <text evidence="1">Forms a complex composed of PxpA, PxpB and PxpC.</text>
</comment>
<comment type="similarity">
    <text evidence="1">Belongs to the LamB/PxpA family.</text>
</comment>
<evidence type="ECO:0000255" key="1">
    <source>
        <dbReference type="HAMAP-Rule" id="MF_00691"/>
    </source>
</evidence>
<feature type="chain" id="PRO_0000184993" description="5-oxoprolinase subunit A">
    <location>
        <begin position="1"/>
        <end position="252"/>
    </location>
</feature>
<proteinExistence type="inferred from homology"/>
<organism>
    <name type="scientific">Bordetella parapertussis (strain 12822 / ATCC BAA-587 / NCTC 13253)</name>
    <dbReference type="NCBI Taxonomy" id="257311"/>
    <lineage>
        <taxon>Bacteria</taxon>
        <taxon>Pseudomonadati</taxon>
        <taxon>Pseudomonadota</taxon>
        <taxon>Betaproteobacteria</taxon>
        <taxon>Burkholderiales</taxon>
        <taxon>Alcaligenaceae</taxon>
        <taxon>Bordetella</taxon>
    </lineage>
</organism>
<sequence length="252" mass="26330">MNPAIDLNCDMGESYGAWRMGNDEAVLQFVTSANIACGFHGGDPSTMRQTVAAALAHGVALGAHPSLPDLAGFGRRAMQITPQEAYDLVVYQVGALAGVAASQGARLHHVKAHGALYNMAAKDAALARAICQAVRDVDSDLVLYGLAGSALIDAARAIGLRAAQEVFADRTYQADGQLTPRSQPDAMITDLDQAIAQVLGMVRDGSVRTPDGQTVALQADTLCIHGDQPDALVFARGIRLALERNGIAIQAA</sequence>
<gene>
    <name evidence="1" type="primary">pxpA</name>
    <name type="ordered locus">BPP4006</name>
</gene>
<protein>
    <recommendedName>
        <fullName evidence="1">5-oxoprolinase subunit A</fullName>
        <shortName evidence="1">5-OPase subunit A</shortName>
        <ecNumber evidence="1">3.5.2.9</ecNumber>
    </recommendedName>
    <alternativeName>
        <fullName evidence="1">5-oxoprolinase (ATP-hydrolyzing) subunit A</fullName>
    </alternativeName>
</protein>
<dbReference type="EC" id="3.5.2.9" evidence="1"/>
<dbReference type="EMBL" id="BX640435">
    <property type="protein sequence ID" value="CAE39289.1"/>
    <property type="molecule type" value="Genomic_DNA"/>
</dbReference>
<dbReference type="RefSeq" id="WP_003815133.1">
    <property type="nucleotide sequence ID" value="NC_002928.3"/>
</dbReference>
<dbReference type="SMR" id="Q7W3M5"/>
<dbReference type="KEGG" id="bpa:BPP4006"/>
<dbReference type="HOGENOM" id="CLU_069535_0_0_4"/>
<dbReference type="Proteomes" id="UP000001421">
    <property type="component" value="Chromosome"/>
</dbReference>
<dbReference type="GO" id="GO:0017168">
    <property type="term" value="F:5-oxoprolinase (ATP-hydrolyzing) activity"/>
    <property type="evidence" value="ECO:0007669"/>
    <property type="project" value="UniProtKB-UniRule"/>
</dbReference>
<dbReference type="GO" id="GO:0005524">
    <property type="term" value="F:ATP binding"/>
    <property type="evidence" value="ECO:0007669"/>
    <property type="project" value="UniProtKB-UniRule"/>
</dbReference>
<dbReference type="GO" id="GO:0005975">
    <property type="term" value="P:carbohydrate metabolic process"/>
    <property type="evidence" value="ECO:0007669"/>
    <property type="project" value="InterPro"/>
</dbReference>
<dbReference type="CDD" id="cd10787">
    <property type="entry name" value="LamB_YcsF_like"/>
    <property type="match status" value="1"/>
</dbReference>
<dbReference type="Gene3D" id="3.20.20.370">
    <property type="entry name" value="Glycoside hydrolase/deacetylase"/>
    <property type="match status" value="1"/>
</dbReference>
<dbReference type="HAMAP" id="MF_00691">
    <property type="entry name" value="PxpA"/>
    <property type="match status" value="1"/>
</dbReference>
<dbReference type="InterPro" id="IPR011330">
    <property type="entry name" value="Glyco_hydro/deAcase_b/a-brl"/>
</dbReference>
<dbReference type="InterPro" id="IPR005501">
    <property type="entry name" value="LamB/YcsF/PxpA-like"/>
</dbReference>
<dbReference type="NCBIfam" id="NF003814">
    <property type="entry name" value="PRK05406.1-3"/>
    <property type="match status" value="1"/>
</dbReference>
<dbReference type="NCBIfam" id="NF003816">
    <property type="entry name" value="PRK05406.1-5"/>
    <property type="match status" value="1"/>
</dbReference>
<dbReference type="PANTHER" id="PTHR30292:SF0">
    <property type="entry name" value="5-OXOPROLINASE SUBUNIT A"/>
    <property type="match status" value="1"/>
</dbReference>
<dbReference type="PANTHER" id="PTHR30292">
    <property type="entry name" value="UNCHARACTERIZED PROTEIN YBGL-RELATED"/>
    <property type="match status" value="1"/>
</dbReference>
<dbReference type="Pfam" id="PF03746">
    <property type="entry name" value="LamB_YcsF"/>
    <property type="match status" value="1"/>
</dbReference>
<dbReference type="SUPFAM" id="SSF88713">
    <property type="entry name" value="Glycoside hydrolase/deacetylase"/>
    <property type="match status" value="1"/>
</dbReference>
<accession>Q7W3M5</accession>